<name>KUP_TOLAT</name>
<sequence length="622" mass="68704">MDAHQKQSLPAVTLAAIGVVYGDIGTSPLYTFKECFSPHIGLPPTQQVVYGFLSLIFWALILVVSVKYLAFVLRADNRGEGGILTLMSLAGRNTYAGTTTVLLVLGLIGGGFFYGEVVITPAMSVLSALEGLSVATPALTPYILPVAIAVLTALFVIQKHGTGSVGKLFGPVMLLWFFSLGTLGAISIFKNPQVLAALNPHWAIQFFLTYKTVAFFSLGSVVLAITGVEALYADMGHFGKFPIQLAWFTVALPALLLNYFGQGALILSNPEAIANPFFMLAPEWLVFPMVILSTMATVIASQAVISGVFSLTRQAVRLGYLPGMNILHTSEVEAGQIYIPFVNWMLYIAVLIVVVTFRESTNLAAAYGIAVTGTMVITTILACTVAHYNWDWPRRVVKIILISLLLIDVPLFLANVVKFFAGGWLPVMLGAIMFMVMATWKWERFLLLRQLSRMSMPLESFVAMVEKETPQKVPGTAIYLSRTQQGIPHALLHNLNHNHVLHERIVLMTFRTQDVPYVDPDQHIEIKSLSPNVWRISATYGFHETPDVYEVFRRCAMKGMAFNLNTTSFFLSRETLLPSHRSILARLRAALFIWLSKNSLRTNDFIHVPADRVVEMGVQVEV</sequence>
<keyword id="KW-0997">Cell inner membrane</keyword>
<keyword id="KW-1003">Cell membrane</keyword>
<keyword id="KW-0406">Ion transport</keyword>
<keyword id="KW-0472">Membrane</keyword>
<keyword id="KW-0630">Potassium</keyword>
<keyword id="KW-0633">Potassium transport</keyword>
<keyword id="KW-1185">Reference proteome</keyword>
<keyword id="KW-0769">Symport</keyword>
<keyword id="KW-0812">Transmembrane</keyword>
<keyword id="KW-1133">Transmembrane helix</keyword>
<keyword id="KW-0813">Transport</keyword>
<feature type="chain" id="PRO_1000215378" description="Probable potassium transport system protein Kup">
    <location>
        <begin position="1"/>
        <end position="622"/>
    </location>
</feature>
<feature type="transmembrane region" description="Helical" evidence="1">
    <location>
        <begin position="9"/>
        <end position="29"/>
    </location>
</feature>
<feature type="transmembrane region" description="Helical" evidence="1">
    <location>
        <begin position="52"/>
        <end position="72"/>
    </location>
</feature>
<feature type="transmembrane region" description="Helical" evidence="1">
    <location>
        <begin position="101"/>
        <end position="121"/>
    </location>
</feature>
<feature type="transmembrane region" description="Helical" evidence="1">
    <location>
        <begin position="137"/>
        <end position="157"/>
    </location>
</feature>
<feature type="transmembrane region" description="Helical" evidence="1">
    <location>
        <begin position="169"/>
        <end position="189"/>
    </location>
</feature>
<feature type="transmembrane region" description="Helical" evidence="1">
    <location>
        <begin position="213"/>
        <end position="233"/>
    </location>
</feature>
<feature type="transmembrane region" description="Helical" evidence="1">
    <location>
        <begin position="247"/>
        <end position="267"/>
    </location>
</feature>
<feature type="transmembrane region" description="Helical" evidence="1">
    <location>
        <begin position="287"/>
        <end position="309"/>
    </location>
</feature>
<feature type="transmembrane region" description="Helical" evidence="1">
    <location>
        <begin position="337"/>
        <end position="357"/>
    </location>
</feature>
<feature type="transmembrane region" description="Helical" evidence="1">
    <location>
        <begin position="363"/>
        <end position="383"/>
    </location>
</feature>
<feature type="transmembrane region" description="Helical" evidence="1">
    <location>
        <begin position="396"/>
        <end position="416"/>
    </location>
</feature>
<feature type="transmembrane region" description="Helical" evidence="1">
    <location>
        <begin position="419"/>
        <end position="439"/>
    </location>
</feature>
<dbReference type="EMBL" id="CP001616">
    <property type="protein sequence ID" value="ACQ91980.1"/>
    <property type="molecule type" value="Genomic_DNA"/>
</dbReference>
<dbReference type="STRING" id="595494.Tola_0350"/>
<dbReference type="KEGG" id="tau:Tola_0350"/>
<dbReference type="eggNOG" id="COG3158">
    <property type="taxonomic scope" value="Bacteria"/>
</dbReference>
<dbReference type="HOGENOM" id="CLU_008142_4_2_6"/>
<dbReference type="OrthoDB" id="9805577at2"/>
<dbReference type="Proteomes" id="UP000009073">
    <property type="component" value="Chromosome"/>
</dbReference>
<dbReference type="GO" id="GO:0005886">
    <property type="term" value="C:plasma membrane"/>
    <property type="evidence" value="ECO:0007669"/>
    <property type="project" value="UniProtKB-SubCell"/>
</dbReference>
<dbReference type="GO" id="GO:0015079">
    <property type="term" value="F:potassium ion transmembrane transporter activity"/>
    <property type="evidence" value="ECO:0007669"/>
    <property type="project" value="UniProtKB-UniRule"/>
</dbReference>
<dbReference type="GO" id="GO:0015293">
    <property type="term" value="F:symporter activity"/>
    <property type="evidence" value="ECO:0007669"/>
    <property type="project" value="UniProtKB-UniRule"/>
</dbReference>
<dbReference type="HAMAP" id="MF_01522">
    <property type="entry name" value="Kup"/>
    <property type="match status" value="1"/>
</dbReference>
<dbReference type="InterPro" id="IPR003855">
    <property type="entry name" value="K+_transporter"/>
</dbReference>
<dbReference type="InterPro" id="IPR053952">
    <property type="entry name" value="K_trans_C"/>
</dbReference>
<dbReference type="InterPro" id="IPR053951">
    <property type="entry name" value="K_trans_N"/>
</dbReference>
<dbReference type="InterPro" id="IPR023051">
    <property type="entry name" value="Kup"/>
</dbReference>
<dbReference type="NCBIfam" id="NF008015">
    <property type="entry name" value="PRK10745.1"/>
    <property type="match status" value="1"/>
</dbReference>
<dbReference type="PANTHER" id="PTHR30540:SF79">
    <property type="entry name" value="LOW AFFINITY POTASSIUM TRANSPORT SYSTEM PROTEIN KUP"/>
    <property type="match status" value="1"/>
</dbReference>
<dbReference type="PANTHER" id="PTHR30540">
    <property type="entry name" value="OSMOTIC STRESS POTASSIUM TRANSPORTER"/>
    <property type="match status" value="1"/>
</dbReference>
<dbReference type="Pfam" id="PF02705">
    <property type="entry name" value="K_trans"/>
    <property type="match status" value="1"/>
</dbReference>
<dbReference type="Pfam" id="PF22776">
    <property type="entry name" value="K_trans_C"/>
    <property type="match status" value="1"/>
</dbReference>
<gene>
    <name evidence="1" type="primary">kup</name>
    <name type="ordered locus">Tola_0350</name>
</gene>
<protein>
    <recommendedName>
        <fullName evidence="1">Probable potassium transport system protein Kup</fullName>
    </recommendedName>
</protein>
<proteinExistence type="inferred from homology"/>
<organism>
    <name type="scientific">Tolumonas auensis (strain DSM 9187 / NBRC 110442 / TA 4)</name>
    <dbReference type="NCBI Taxonomy" id="595494"/>
    <lineage>
        <taxon>Bacteria</taxon>
        <taxon>Pseudomonadati</taxon>
        <taxon>Pseudomonadota</taxon>
        <taxon>Gammaproteobacteria</taxon>
        <taxon>Aeromonadales</taxon>
        <taxon>Aeromonadaceae</taxon>
        <taxon>Tolumonas</taxon>
    </lineage>
</organism>
<evidence type="ECO:0000255" key="1">
    <source>
        <dbReference type="HAMAP-Rule" id="MF_01522"/>
    </source>
</evidence>
<reference key="1">
    <citation type="submission" date="2009-05" db="EMBL/GenBank/DDBJ databases">
        <title>Complete sequence of Tolumonas auensis DSM 9187.</title>
        <authorList>
            <consortium name="US DOE Joint Genome Institute"/>
            <person name="Lucas S."/>
            <person name="Copeland A."/>
            <person name="Lapidus A."/>
            <person name="Glavina del Rio T."/>
            <person name="Tice H."/>
            <person name="Bruce D."/>
            <person name="Goodwin L."/>
            <person name="Pitluck S."/>
            <person name="Chertkov O."/>
            <person name="Brettin T."/>
            <person name="Detter J.C."/>
            <person name="Han C."/>
            <person name="Larimer F."/>
            <person name="Land M."/>
            <person name="Hauser L."/>
            <person name="Kyrpides N."/>
            <person name="Mikhailova N."/>
            <person name="Spring S."/>
            <person name="Beller H."/>
        </authorList>
    </citation>
    <scope>NUCLEOTIDE SEQUENCE [LARGE SCALE GENOMIC DNA]</scope>
    <source>
        <strain>DSM 9187 / NBRC 110442 / TA 4</strain>
    </source>
</reference>
<comment type="function">
    <text evidence="1">Transport of potassium into the cell. Likely operates as a K(+):H(+) symporter.</text>
</comment>
<comment type="catalytic activity">
    <reaction evidence="1">
        <text>K(+)(in) + H(+)(in) = K(+)(out) + H(+)(out)</text>
        <dbReference type="Rhea" id="RHEA:28490"/>
        <dbReference type="ChEBI" id="CHEBI:15378"/>
        <dbReference type="ChEBI" id="CHEBI:29103"/>
    </reaction>
    <physiologicalReaction direction="right-to-left" evidence="1">
        <dbReference type="Rhea" id="RHEA:28492"/>
    </physiologicalReaction>
</comment>
<comment type="subcellular location">
    <subcellularLocation>
        <location evidence="1">Cell inner membrane</location>
        <topology evidence="1">Multi-pass membrane protein</topology>
    </subcellularLocation>
</comment>
<comment type="similarity">
    <text evidence="1">Belongs to the HAK/KUP transporter (TC 2.A.72) family.</text>
</comment>
<accession>C4L981</accession>